<feature type="chain" id="PRO_1000116396" description="Probable tRNA sulfurtransferase">
    <location>
        <begin position="1"/>
        <end position="404"/>
    </location>
</feature>
<feature type="domain" description="THUMP" evidence="1">
    <location>
        <begin position="61"/>
        <end position="166"/>
    </location>
</feature>
<feature type="binding site" evidence="1">
    <location>
        <begin position="184"/>
        <end position="185"/>
    </location>
    <ligand>
        <name>ATP</name>
        <dbReference type="ChEBI" id="CHEBI:30616"/>
    </ligand>
</feature>
<feature type="binding site" evidence="1">
    <location>
        <begin position="209"/>
        <end position="210"/>
    </location>
    <ligand>
        <name>ATP</name>
        <dbReference type="ChEBI" id="CHEBI:30616"/>
    </ligand>
</feature>
<feature type="binding site" evidence="1">
    <location>
        <position position="266"/>
    </location>
    <ligand>
        <name>ATP</name>
        <dbReference type="ChEBI" id="CHEBI:30616"/>
    </ligand>
</feature>
<feature type="binding site" evidence="1">
    <location>
        <position position="288"/>
    </location>
    <ligand>
        <name>ATP</name>
        <dbReference type="ChEBI" id="CHEBI:30616"/>
    </ligand>
</feature>
<feature type="binding site" evidence="1">
    <location>
        <position position="297"/>
    </location>
    <ligand>
        <name>ATP</name>
        <dbReference type="ChEBI" id="CHEBI:30616"/>
    </ligand>
</feature>
<reference key="1">
    <citation type="submission" date="2008-10" db="EMBL/GenBank/DDBJ databases">
        <title>Genome sequence of Bacillus cereus G9842.</title>
        <authorList>
            <person name="Dodson R.J."/>
            <person name="Durkin A.S."/>
            <person name="Rosovitz M.J."/>
            <person name="Rasko D.A."/>
            <person name="Hoffmaster A."/>
            <person name="Ravel J."/>
            <person name="Sutton G."/>
        </authorList>
    </citation>
    <scope>NUCLEOTIDE SEQUENCE [LARGE SCALE GENOMIC DNA]</scope>
    <source>
        <strain>G9842</strain>
    </source>
</reference>
<sequence length="404" mass="45708">MMTYEYILVRYGEMTTKGKNRSKFVSTLKDNVKFKLKKFPNIKIDATHDRMYIQLNGEDHEAISERLKDVFGIHKFNLAMKVPSELEDIKKGALAAFLQVKDDVKTFKITVHRSDKRFPMKTMELLPEIGGHILENTEDITVDVHNPDVNVRIEIRSGYSYIMCGEHMGAGGLPVGVGGKVMVLLSGGIDSPVAAYLTMKRGVSVEAVHFHSPPFTSERAKQKVIDLAQGLTKYCKRVTLHLVPFTEVQKTINKEIPSSYSMTVMRRMMMRITEQIAEERNALAITTGESLGQVASQTLDSMHTINEVTNYPVIRPLITMDKLEIIKIAEEIGTYDISIRPYEDCCTVFTPASPATKPKREKANRFEAKYDFTPLIEEAVANKETMVLQTVEVVAEEEKFEELF</sequence>
<dbReference type="EC" id="2.8.1.4" evidence="1"/>
<dbReference type="EMBL" id="CP001186">
    <property type="protein sequence ID" value="ACK97401.1"/>
    <property type="molecule type" value="Genomic_DNA"/>
</dbReference>
<dbReference type="RefSeq" id="WP_000989272.1">
    <property type="nucleotide sequence ID" value="NC_011772.1"/>
</dbReference>
<dbReference type="SMR" id="B7IK47"/>
<dbReference type="KEGG" id="bcg:BCG9842_B0479"/>
<dbReference type="HOGENOM" id="CLU_037952_4_0_9"/>
<dbReference type="UniPathway" id="UPA00060"/>
<dbReference type="Proteomes" id="UP000006744">
    <property type="component" value="Chromosome"/>
</dbReference>
<dbReference type="GO" id="GO:0005829">
    <property type="term" value="C:cytosol"/>
    <property type="evidence" value="ECO:0007669"/>
    <property type="project" value="TreeGrafter"/>
</dbReference>
<dbReference type="GO" id="GO:0005524">
    <property type="term" value="F:ATP binding"/>
    <property type="evidence" value="ECO:0007669"/>
    <property type="project" value="UniProtKB-UniRule"/>
</dbReference>
<dbReference type="GO" id="GO:0004810">
    <property type="term" value="F:CCA tRNA nucleotidyltransferase activity"/>
    <property type="evidence" value="ECO:0007669"/>
    <property type="project" value="InterPro"/>
</dbReference>
<dbReference type="GO" id="GO:0000049">
    <property type="term" value="F:tRNA binding"/>
    <property type="evidence" value="ECO:0007669"/>
    <property type="project" value="UniProtKB-UniRule"/>
</dbReference>
<dbReference type="GO" id="GO:0140741">
    <property type="term" value="F:tRNA-uracil-4 sulfurtransferase activity"/>
    <property type="evidence" value="ECO:0007669"/>
    <property type="project" value="UniProtKB-EC"/>
</dbReference>
<dbReference type="GO" id="GO:0009228">
    <property type="term" value="P:thiamine biosynthetic process"/>
    <property type="evidence" value="ECO:0007669"/>
    <property type="project" value="UniProtKB-KW"/>
</dbReference>
<dbReference type="GO" id="GO:0009229">
    <property type="term" value="P:thiamine diphosphate biosynthetic process"/>
    <property type="evidence" value="ECO:0007669"/>
    <property type="project" value="UniProtKB-UniRule"/>
</dbReference>
<dbReference type="GO" id="GO:0052837">
    <property type="term" value="P:thiazole biosynthetic process"/>
    <property type="evidence" value="ECO:0007669"/>
    <property type="project" value="TreeGrafter"/>
</dbReference>
<dbReference type="GO" id="GO:0002937">
    <property type="term" value="P:tRNA 4-thiouridine biosynthesis"/>
    <property type="evidence" value="ECO:0007669"/>
    <property type="project" value="TreeGrafter"/>
</dbReference>
<dbReference type="CDD" id="cd01712">
    <property type="entry name" value="PPase_ThiI"/>
    <property type="match status" value="1"/>
</dbReference>
<dbReference type="CDD" id="cd11716">
    <property type="entry name" value="THUMP_ThiI"/>
    <property type="match status" value="1"/>
</dbReference>
<dbReference type="FunFam" id="3.30.2130.30:FF:000003">
    <property type="entry name" value="Probable tRNA sulfurtransferase"/>
    <property type="match status" value="1"/>
</dbReference>
<dbReference type="FunFam" id="3.40.50.620:FF:000053">
    <property type="entry name" value="Probable tRNA sulfurtransferase"/>
    <property type="match status" value="1"/>
</dbReference>
<dbReference type="Gene3D" id="3.30.2130.30">
    <property type="match status" value="1"/>
</dbReference>
<dbReference type="Gene3D" id="3.40.50.620">
    <property type="entry name" value="HUPs"/>
    <property type="match status" value="1"/>
</dbReference>
<dbReference type="HAMAP" id="MF_00021">
    <property type="entry name" value="ThiI"/>
    <property type="match status" value="1"/>
</dbReference>
<dbReference type="InterPro" id="IPR014729">
    <property type="entry name" value="Rossmann-like_a/b/a_fold"/>
</dbReference>
<dbReference type="InterPro" id="IPR020536">
    <property type="entry name" value="ThiI_AANH"/>
</dbReference>
<dbReference type="InterPro" id="IPR054173">
    <property type="entry name" value="ThiI_fer"/>
</dbReference>
<dbReference type="InterPro" id="IPR049961">
    <property type="entry name" value="ThiI_N"/>
</dbReference>
<dbReference type="InterPro" id="IPR004114">
    <property type="entry name" value="THUMP_dom"/>
</dbReference>
<dbReference type="InterPro" id="IPR049962">
    <property type="entry name" value="THUMP_ThiI"/>
</dbReference>
<dbReference type="InterPro" id="IPR003720">
    <property type="entry name" value="tRNA_STrfase"/>
</dbReference>
<dbReference type="InterPro" id="IPR050102">
    <property type="entry name" value="tRNA_sulfurtransferase_ThiI"/>
</dbReference>
<dbReference type="NCBIfam" id="TIGR00342">
    <property type="entry name" value="tRNA uracil 4-sulfurtransferase ThiI"/>
    <property type="match status" value="1"/>
</dbReference>
<dbReference type="PANTHER" id="PTHR43209">
    <property type="entry name" value="TRNA SULFURTRANSFERASE"/>
    <property type="match status" value="1"/>
</dbReference>
<dbReference type="PANTHER" id="PTHR43209:SF1">
    <property type="entry name" value="TRNA SULFURTRANSFERASE"/>
    <property type="match status" value="1"/>
</dbReference>
<dbReference type="Pfam" id="PF02568">
    <property type="entry name" value="ThiI"/>
    <property type="match status" value="1"/>
</dbReference>
<dbReference type="Pfam" id="PF22025">
    <property type="entry name" value="ThiI_fer"/>
    <property type="match status" value="1"/>
</dbReference>
<dbReference type="Pfam" id="PF02926">
    <property type="entry name" value="THUMP"/>
    <property type="match status" value="1"/>
</dbReference>
<dbReference type="SMART" id="SM00981">
    <property type="entry name" value="THUMP"/>
    <property type="match status" value="1"/>
</dbReference>
<dbReference type="SUPFAM" id="SSF52402">
    <property type="entry name" value="Adenine nucleotide alpha hydrolases-like"/>
    <property type="match status" value="1"/>
</dbReference>
<dbReference type="SUPFAM" id="SSF143437">
    <property type="entry name" value="THUMP domain-like"/>
    <property type="match status" value="1"/>
</dbReference>
<dbReference type="PROSITE" id="PS51165">
    <property type="entry name" value="THUMP"/>
    <property type="match status" value="1"/>
</dbReference>
<accession>B7IK47</accession>
<organism>
    <name type="scientific">Bacillus cereus (strain G9842)</name>
    <dbReference type="NCBI Taxonomy" id="405531"/>
    <lineage>
        <taxon>Bacteria</taxon>
        <taxon>Bacillati</taxon>
        <taxon>Bacillota</taxon>
        <taxon>Bacilli</taxon>
        <taxon>Bacillales</taxon>
        <taxon>Bacillaceae</taxon>
        <taxon>Bacillus</taxon>
        <taxon>Bacillus cereus group</taxon>
    </lineage>
</organism>
<keyword id="KW-0067">ATP-binding</keyword>
<keyword id="KW-0963">Cytoplasm</keyword>
<keyword id="KW-0547">Nucleotide-binding</keyword>
<keyword id="KW-0694">RNA-binding</keyword>
<keyword id="KW-0784">Thiamine biosynthesis</keyword>
<keyword id="KW-0808">Transferase</keyword>
<keyword id="KW-0820">tRNA-binding</keyword>
<protein>
    <recommendedName>
        <fullName evidence="1">Probable tRNA sulfurtransferase</fullName>
        <ecNumber evidence="1">2.8.1.4</ecNumber>
    </recommendedName>
    <alternativeName>
        <fullName evidence="1">Sulfur carrier protein ThiS sulfurtransferase</fullName>
    </alternativeName>
    <alternativeName>
        <fullName evidence="1">Thiamine biosynthesis protein ThiI</fullName>
    </alternativeName>
    <alternativeName>
        <fullName evidence="1">tRNA 4-thiouridine synthase</fullName>
    </alternativeName>
</protein>
<evidence type="ECO:0000255" key="1">
    <source>
        <dbReference type="HAMAP-Rule" id="MF_00021"/>
    </source>
</evidence>
<name>THII_BACC2</name>
<proteinExistence type="inferred from homology"/>
<comment type="function">
    <text evidence="1">Catalyzes the ATP-dependent transfer of a sulfur to tRNA to produce 4-thiouridine in position 8 of tRNAs, which functions as a near-UV photosensor. Also catalyzes the transfer of sulfur to the sulfur carrier protein ThiS, forming ThiS-thiocarboxylate. This is a step in the synthesis of thiazole, in the thiamine biosynthesis pathway. The sulfur is donated as persulfide by IscS.</text>
</comment>
<comment type="catalytic activity">
    <reaction evidence="1">
        <text>[ThiI sulfur-carrier protein]-S-sulfanyl-L-cysteine + a uridine in tRNA + 2 reduced [2Fe-2S]-[ferredoxin] + ATP + H(+) = [ThiI sulfur-carrier protein]-L-cysteine + a 4-thiouridine in tRNA + 2 oxidized [2Fe-2S]-[ferredoxin] + AMP + diphosphate</text>
        <dbReference type="Rhea" id="RHEA:24176"/>
        <dbReference type="Rhea" id="RHEA-COMP:10000"/>
        <dbReference type="Rhea" id="RHEA-COMP:10001"/>
        <dbReference type="Rhea" id="RHEA-COMP:13337"/>
        <dbReference type="Rhea" id="RHEA-COMP:13338"/>
        <dbReference type="Rhea" id="RHEA-COMP:13339"/>
        <dbReference type="Rhea" id="RHEA-COMP:13340"/>
        <dbReference type="ChEBI" id="CHEBI:15378"/>
        <dbReference type="ChEBI" id="CHEBI:29950"/>
        <dbReference type="ChEBI" id="CHEBI:30616"/>
        <dbReference type="ChEBI" id="CHEBI:33019"/>
        <dbReference type="ChEBI" id="CHEBI:33737"/>
        <dbReference type="ChEBI" id="CHEBI:33738"/>
        <dbReference type="ChEBI" id="CHEBI:61963"/>
        <dbReference type="ChEBI" id="CHEBI:65315"/>
        <dbReference type="ChEBI" id="CHEBI:136798"/>
        <dbReference type="ChEBI" id="CHEBI:456215"/>
        <dbReference type="EC" id="2.8.1.4"/>
    </reaction>
</comment>
<comment type="catalytic activity">
    <reaction evidence="1">
        <text>[ThiS sulfur-carrier protein]-C-terminal Gly-Gly-AMP + S-sulfanyl-L-cysteinyl-[cysteine desulfurase] + AH2 = [ThiS sulfur-carrier protein]-C-terminal-Gly-aminoethanethioate + L-cysteinyl-[cysteine desulfurase] + A + AMP + 2 H(+)</text>
        <dbReference type="Rhea" id="RHEA:43340"/>
        <dbReference type="Rhea" id="RHEA-COMP:12157"/>
        <dbReference type="Rhea" id="RHEA-COMP:12158"/>
        <dbReference type="Rhea" id="RHEA-COMP:12910"/>
        <dbReference type="Rhea" id="RHEA-COMP:19908"/>
        <dbReference type="ChEBI" id="CHEBI:13193"/>
        <dbReference type="ChEBI" id="CHEBI:15378"/>
        <dbReference type="ChEBI" id="CHEBI:17499"/>
        <dbReference type="ChEBI" id="CHEBI:29950"/>
        <dbReference type="ChEBI" id="CHEBI:61963"/>
        <dbReference type="ChEBI" id="CHEBI:90618"/>
        <dbReference type="ChEBI" id="CHEBI:232372"/>
        <dbReference type="ChEBI" id="CHEBI:456215"/>
    </reaction>
</comment>
<comment type="pathway">
    <text evidence="1">Cofactor biosynthesis; thiamine diphosphate biosynthesis.</text>
</comment>
<comment type="subcellular location">
    <subcellularLocation>
        <location evidence="1">Cytoplasm</location>
    </subcellularLocation>
</comment>
<comment type="similarity">
    <text evidence="1">Belongs to the ThiI family.</text>
</comment>
<gene>
    <name evidence="1" type="primary">thiI</name>
    <name type="ordered locus">BCG9842_B0479</name>
</gene>